<keyword id="KW-1185">Reference proteome</keyword>
<feature type="chain" id="PRO_0000169794" description="Putative inactive recombination-promoting nuclease-like protein YjiP">
    <location>
        <begin position="1"/>
        <end position="103"/>
    </location>
</feature>
<sequence length="103" mass="12078">MTNFTTSTPHDALFKTFLTHPDTARDFMEIHLPKDLRELCDLDSLKLESASFVDEKLRALHSDILWSVKTREGDGYIYVVIEHQSREDIHMAFRLMRYSMAVM</sequence>
<comment type="function">
    <text evidence="1 3 4 5">This pseudogene is the N-terminal fragment of low activity DNA endonuclease RpnD which probably yields 3'-hydroxyl ends (By similarity). The intact protein can be seen in this entry (AC B7NGZ6). Expression of the repaired protein increases the frequency of recA-independent recombination, but also decreases viability probably via DNA damage; in a RecA strain expression has no effect on viability but does induce the SOS repair response (PubMed:26162088, PubMed:26618540). May play a role in horizontal gene transfer (PubMed:26162088, PubMed:26618540, PubMed:28096446).</text>
</comment>
<comment type="disruption phenotype">
    <text evidence="2">Decreases biofilm formation (PubMed:16385049).</text>
</comment>
<comment type="similarity">
    <text evidence="7">Belongs to the Rpn/YhgA-like nuclease family.</text>
</comment>
<comment type="caution">
    <text evidence="3 7">Could be the product of a pseudogene. Experiments were performed with a repaired version of the protein (AC B7NGZ6) (PubMed:26162088).</text>
</comment>
<reference key="1">
    <citation type="journal article" date="1995" name="Nucleic Acids Res.">
        <title>Analysis of the Escherichia coli genome VI: DNA sequence of the region from 92.8 through 100 minutes.</title>
        <authorList>
            <person name="Burland V.D."/>
            <person name="Plunkett G. III"/>
            <person name="Sofia H.J."/>
            <person name="Daniels D.L."/>
            <person name="Blattner F.R."/>
        </authorList>
    </citation>
    <scope>NUCLEOTIDE SEQUENCE [LARGE SCALE GENOMIC DNA]</scope>
    <source>
        <strain>K12 / MG1655 / ATCC 47076</strain>
    </source>
</reference>
<reference key="2">
    <citation type="journal article" date="1997" name="Science">
        <title>The complete genome sequence of Escherichia coli K-12.</title>
        <authorList>
            <person name="Blattner F.R."/>
            <person name="Plunkett G. III"/>
            <person name="Bloch C.A."/>
            <person name="Perna N.T."/>
            <person name="Burland V."/>
            <person name="Riley M."/>
            <person name="Collado-Vides J."/>
            <person name="Glasner J.D."/>
            <person name="Rode C.K."/>
            <person name="Mayhew G.F."/>
            <person name="Gregor J."/>
            <person name="Davis N.W."/>
            <person name="Kirkpatrick H.A."/>
            <person name="Goeden M.A."/>
            <person name="Rose D.J."/>
            <person name="Mau B."/>
            <person name="Shao Y."/>
        </authorList>
    </citation>
    <scope>NUCLEOTIDE SEQUENCE [LARGE SCALE GENOMIC DNA]</scope>
    <source>
        <strain>K12 / MG1655 / ATCC 47076</strain>
    </source>
</reference>
<reference key="3">
    <citation type="journal article" date="2006" name="Mol. Syst. Biol.">
        <title>Highly accurate genome sequences of Escherichia coli K-12 strains MG1655 and W3110.</title>
        <authorList>
            <person name="Hayashi K."/>
            <person name="Morooka N."/>
            <person name="Yamamoto Y."/>
            <person name="Fujita K."/>
            <person name="Isono K."/>
            <person name="Choi S."/>
            <person name="Ohtsubo E."/>
            <person name="Baba T."/>
            <person name="Wanner B.L."/>
            <person name="Mori H."/>
            <person name="Horiuchi T."/>
        </authorList>
    </citation>
    <scope>NUCLEOTIDE SEQUENCE [LARGE SCALE GENOMIC DNA]</scope>
    <source>
        <strain>K12 / W3110 / ATCC 27325 / DSM 5911</strain>
    </source>
</reference>
<reference key="4">
    <citation type="journal article" date="2006" name="J. Bacteriol.">
        <title>YdgG (TqsA) controls biofilm formation in Escherichia coli K-12 through autoinducer 2 transport.</title>
        <authorList>
            <person name="Herzberg M."/>
            <person name="Kaye I.K."/>
            <person name="Peti W."/>
            <person name="Wood T.K."/>
        </authorList>
    </citation>
    <scope>DISRUPTION PHENOTYPE</scope>
    <source>
        <strain>K12 / BW25113</strain>
    </source>
</reference>
<reference key="5">
    <citation type="journal article" date="2015" name="PLoS ONE">
        <title>Novel recA-independent horizontal gene transfer in Escherichia coli K-12.</title>
        <authorList>
            <person name="Kingston A.W."/>
            <person name="Roussel-Rossin C."/>
            <person name="Dupont C."/>
            <person name="Raleigh E.A."/>
        </authorList>
    </citation>
    <scope>FUNCTION</scope>
    <source>
        <strain>K12</strain>
    </source>
</reference>
<reference key="6">
    <citation type="journal article" date="2015" name="PLoS ONE">
        <title>Correction: Novel recA-independent horizontal gene transfer in Escherichia coli K-12.</title>
        <authorList>
            <person name="Kingston A.W."/>
            <person name="Roussel-Rossin C."/>
            <person name="Dupont C."/>
            <person name="Raleigh E.A."/>
        </authorList>
    </citation>
    <scope>ERRATUM OF PUBMED:26162088</scope>
</reference>
<reference key="7">
    <citation type="journal article" date="2017" name="J. Bacteriol.">
        <title>The Rpn (YhgA-like) proteins of Escherichia coli K-12 and their contribution to RecA-independent horizontal transfer.</title>
        <authorList>
            <person name="Kingston A.W."/>
            <person name="Ponkratz C."/>
            <person name="Raleigh E.A."/>
        </authorList>
    </citation>
    <scope>FUNCTION</scope>
    <source>
        <strain>K12</strain>
    </source>
</reference>
<protein>
    <recommendedName>
        <fullName>Putative inactive recombination-promoting nuclease-like protein YjiP</fullName>
    </recommendedName>
</protein>
<dbReference type="EMBL" id="U14003">
    <property type="protein sequence ID" value="AAA97234.1"/>
    <property type="molecule type" value="Genomic_DNA"/>
</dbReference>
<dbReference type="EMBL" id="U00096">
    <property type="status" value="NOT_ANNOTATED_CDS"/>
    <property type="molecule type" value="Genomic_DNA"/>
</dbReference>
<dbReference type="EMBL" id="AP009048">
    <property type="status" value="NOT_ANNOTATED_CDS"/>
    <property type="molecule type" value="Genomic_DNA"/>
</dbReference>
<dbReference type="PIR" id="S56563">
    <property type="entry name" value="S56563"/>
</dbReference>
<dbReference type="FunCoup" id="P0DP21">
    <property type="interactions" value="64"/>
</dbReference>
<dbReference type="EchoBASE" id="EB2465"/>
<dbReference type="InParanoid" id="P0DP21"/>
<dbReference type="Proteomes" id="UP000000625">
    <property type="component" value="Chromosome"/>
</dbReference>
<dbReference type="GO" id="GO:0044010">
    <property type="term" value="P:single-species biofilm formation"/>
    <property type="evidence" value="ECO:0000315"/>
    <property type="project" value="EcoCyc"/>
</dbReference>
<dbReference type="InterPro" id="IPR051699">
    <property type="entry name" value="Rpn/YhgA-like_nuclease"/>
</dbReference>
<dbReference type="InterPro" id="IPR010106">
    <property type="entry name" value="RpnA"/>
</dbReference>
<dbReference type="InterPro" id="IPR006842">
    <property type="entry name" value="Transposase_31"/>
</dbReference>
<dbReference type="NCBIfam" id="TIGR01784">
    <property type="entry name" value="T_den_put_tspse"/>
    <property type="match status" value="1"/>
</dbReference>
<dbReference type="PANTHER" id="PTHR34611">
    <property type="match status" value="1"/>
</dbReference>
<dbReference type="PANTHER" id="PTHR34611:SF2">
    <property type="entry name" value="INACTIVE RECOMBINATION-PROMOTING NUCLEASE-LIKE PROTEIN RPNE-RELATED"/>
    <property type="match status" value="1"/>
</dbReference>
<dbReference type="Pfam" id="PF04754">
    <property type="entry name" value="Transposase_31"/>
    <property type="match status" value="1"/>
</dbReference>
<organism>
    <name type="scientific">Escherichia coli (strain K12)</name>
    <dbReference type="NCBI Taxonomy" id="83333"/>
    <lineage>
        <taxon>Bacteria</taxon>
        <taxon>Pseudomonadati</taxon>
        <taxon>Pseudomonadota</taxon>
        <taxon>Gammaproteobacteria</taxon>
        <taxon>Enterobacterales</taxon>
        <taxon>Enterobacteriaceae</taxon>
        <taxon>Escherichia</taxon>
    </lineage>
</organism>
<gene>
    <name type="primary">yjiP</name>
    <name evidence="6" type="synonym">rpnD</name>
    <name type="ordered locus">b4338</name>
    <name type="ordered locus">JW5953</name>
</gene>
<accession>P0DP21</accession>
<accession>P39387</accession>
<accession>P39388</accession>
<accession>Q2M5X5</accession>
<evidence type="ECO:0000250" key="1">
    <source>
        <dbReference type="UniProtKB" id="P31667"/>
    </source>
</evidence>
<evidence type="ECO:0000269" key="2">
    <source>
    </source>
</evidence>
<evidence type="ECO:0000269" key="3">
    <source>
    </source>
</evidence>
<evidence type="ECO:0000269" key="4">
    <source>
    </source>
</evidence>
<evidence type="ECO:0000269" key="5">
    <source>
    </source>
</evidence>
<evidence type="ECO:0000303" key="6">
    <source>
    </source>
</evidence>
<evidence type="ECO:0000305" key="7"/>
<proteinExistence type="uncertain"/>
<name>YJIP_ECOLI</name>